<feature type="chain" id="PRO_0000160328" description="ATP-dependent Clp protease ATP-binding subunit ClpX">
    <location>
        <begin position="1"/>
        <end position="429"/>
    </location>
</feature>
<feature type="domain" description="ClpX-type ZB" evidence="2">
    <location>
        <begin position="2"/>
        <end position="56"/>
    </location>
</feature>
<feature type="binding site" evidence="2">
    <location>
        <position position="15"/>
    </location>
    <ligand>
        <name>Zn(2+)</name>
        <dbReference type="ChEBI" id="CHEBI:29105"/>
    </ligand>
</feature>
<feature type="binding site" evidence="2">
    <location>
        <position position="18"/>
    </location>
    <ligand>
        <name>Zn(2+)</name>
        <dbReference type="ChEBI" id="CHEBI:29105"/>
    </ligand>
</feature>
<feature type="binding site" evidence="2">
    <location>
        <position position="37"/>
    </location>
    <ligand>
        <name>Zn(2+)</name>
        <dbReference type="ChEBI" id="CHEBI:29105"/>
    </ligand>
</feature>
<feature type="binding site" evidence="2">
    <location>
        <position position="40"/>
    </location>
    <ligand>
        <name>Zn(2+)</name>
        <dbReference type="ChEBI" id="CHEBI:29105"/>
    </ligand>
</feature>
<feature type="binding site" evidence="1">
    <location>
        <begin position="125"/>
        <end position="132"/>
    </location>
    <ligand>
        <name>ATP</name>
        <dbReference type="ChEBI" id="CHEBI:30616"/>
    </ligand>
</feature>
<accession>P57548</accession>
<protein>
    <recommendedName>
        <fullName evidence="1">ATP-dependent Clp protease ATP-binding subunit ClpX</fullName>
    </recommendedName>
</protein>
<keyword id="KW-0067">ATP-binding</keyword>
<keyword id="KW-0143">Chaperone</keyword>
<keyword id="KW-0479">Metal-binding</keyword>
<keyword id="KW-0547">Nucleotide-binding</keyword>
<keyword id="KW-1185">Reference proteome</keyword>
<keyword id="KW-0862">Zinc</keyword>
<gene>
    <name evidence="1" type="primary">clpX</name>
    <name type="ordered locus">BU476</name>
</gene>
<sequence>MTDKSKDNSKSLLYCSFCGKNQKEVQKLIAGPKVYICDECIRLCNDIITEETIKQNNITDTENKINYLPKPHEIKKHLDNYVIGQNYTKKVLSVAVYNHYKRLYNFNKKTDSVELGKSNILLIGPTGSGKTLLAQTLAKLLDVPFTITDATTLTEAGYVGEDVENVIQKLLQKCKYNVKKAELGIVYIDEIDKIARKSDNPSITRDVSGEGVQQALLKLIEGTLASIPPQGGRKHPQQEFLQVNTSNILFICAGAFSELSKIVSKRLDAGTEIGFKANIKEKKQKKSEDFLLKQVEPEDLIKFGLIPEFIGRLPIITILNKLTEDALVNILCKPKNALIKQYQTLFELENVKLEFNAESIQLIAKKAMNKNTGARGLRSIIEGILLNIMYELPSMVNIEKILINESVVNSNSLPKIIYGKNKSKKASGE</sequence>
<dbReference type="EMBL" id="BA000003">
    <property type="protein sequence ID" value="BAB13173.1"/>
    <property type="molecule type" value="Genomic_DNA"/>
</dbReference>
<dbReference type="RefSeq" id="NP_240287.1">
    <property type="nucleotide sequence ID" value="NC_002528.1"/>
</dbReference>
<dbReference type="RefSeq" id="WP_009874428.1">
    <property type="nucleotide sequence ID" value="NC_002528.1"/>
</dbReference>
<dbReference type="SMR" id="P57548"/>
<dbReference type="STRING" id="563178.BUAP5A_469"/>
<dbReference type="EnsemblBacteria" id="BAB13173">
    <property type="protein sequence ID" value="BAB13173"/>
    <property type="gene ID" value="BAB13173"/>
</dbReference>
<dbReference type="KEGG" id="buc:BU476"/>
<dbReference type="PATRIC" id="fig|107806.10.peg.485"/>
<dbReference type="eggNOG" id="COG1219">
    <property type="taxonomic scope" value="Bacteria"/>
</dbReference>
<dbReference type="HOGENOM" id="CLU_014218_8_2_6"/>
<dbReference type="Proteomes" id="UP000001806">
    <property type="component" value="Chromosome"/>
</dbReference>
<dbReference type="GO" id="GO:0009376">
    <property type="term" value="C:HslUV protease complex"/>
    <property type="evidence" value="ECO:0007669"/>
    <property type="project" value="TreeGrafter"/>
</dbReference>
<dbReference type="GO" id="GO:0005524">
    <property type="term" value="F:ATP binding"/>
    <property type="evidence" value="ECO:0007669"/>
    <property type="project" value="UniProtKB-UniRule"/>
</dbReference>
<dbReference type="GO" id="GO:0016887">
    <property type="term" value="F:ATP hydrolysis activity"/>
    <property type="evidence" value="ECO:0007669"/>
    <property type="project" value="InterPro"/>
</dbReference>
<dbReference type="GO" id="GO:0140662">
    <property type="term" value="F:ATP-dependent protein folding chaperone"/>
    <property type="evidence" value="ECO:0007669"/>
    <property type="project" value="InterPro"/>
</dbReference>
<dbReference type="GO" id="GO:0046983">
    <property type="term" value="F:protein dimerization activity"/>
    <property type="evidence" value="ECO:0007669"/>
    <property type="project" value="InterPro"/>
</dbReference>
<dbReference type="GO" id="GO:0051082">
    <property type="term" value="F:unfolded protein binding"/>
    <property type="evidence" value="ECO:0007669"/>
    <property type="project" value="UniProtKB-UniRule"/>
</dbReference>
<dbReference type="GO" id="GO:0008270">
    <property type="term" value="F:zinc ion binding"/>
    <property type="evidence" value="ECO:0007669"/>
    <property type="project" value="InterPro"/>
</dbReference>
<dbReference type="GO" id="GO:0051301">
    <property type="term" value="P:cell division"/>
    <property type="evidence" value="ECO:0007669"/>
    <property type="project" value="TreeGrafter"/>
</dbReference>
<dbReference type="GO" id="GO:0051603">
    <property type="term" value="P:proteolysis involved in protein catabolic process"/>
    <property type="evidence" value="ECO:0007669"/>
    <property type="project" value="TreeGrafter"/>
</dbReference>
<dbReference type="CDD" id="cd19497">
    <property type="entry name" value="RecA-like_ClpX"/>
    <property type="match status" value="1"/>
</dbReference>
<dbReference type="FunFam" id="1.10.8.60:FF:000002">
    <property type="entry name" value="ATP-dependent Clp protease ATP-binding subunit ClpX"/>
    <property type="match status" value="1"/>
</dbReference>
<dbReference type="FunFam" id="3.40.50.300:FF:000005">
    <property type="entry name" value="ATP-dependent Clp protease ATP-binding subunit ClpX"/>
    <property type="match status" value="1"/>
</dbReference>
<dbReference type="Gene3D" id="1.10.8.60">
    <property type="match status" value="1"/>
</dbReference>
<dbReference type="Gene3D" id="6.20.220.10">
    <property type="entry name" value="ClpX chaperone, C4-type zinc finger domain"/>
    <property type="match status" value="1"/>
</dbReference>
<dbReference type="Gene3D" id="3.40.50.300">
    <property type="entry name" value="P-loop containing nucleotide triphosphate hydrolases"/>
    <property type="match status" value="1"/>
</dbReference>
<dbReference type="HAMAP" id="MF_00175">
    <property type="entry name" value="ClpX"/>
    <property type="match status" value="1"/>
</dbReference>
<dbReference type="InterPro" id="IPR003593">
    <property type="entry name" value="AAA+_ATPase"/>
</dbReference>
<dbReference type="InterPro" id="IPR050052">
    <property type="entry name" value="ATP-dep_Clp_protease_ClpX"/>
</dbReference>
<dbReference type="InterPro" id="IPR003959">
    <property type="entry name" value="ATPase_AAA_core"/>
</dbReference>
<dbReference type="InterPro" id="IPR019489">
    <property type="entry name" value="Clp_ATPase_C"/>
</dbReference>
<dbReference type="InterPro" id="IPR004487">
    <property type="entry name" value="Clp_protease_ATP-bd_su_ClpX"/>
</dbReference>
<dbReference type="InterPro" id="IPR046425">
    <property type="entry name" value="ClpX_bact"/>
</dbReference>
<dbReference type="InterPro" id="IPR027417">
    <property type="entry name" value="P-loop_NTPase"/>
</dbReference>
<dbReference type="InterPro" id="IPR010603">
    <property type="entry name" value="Znf_CppX_C4"/>
</dbReference>
<dbReference type="InterPro" id="IPR038366">
    <property type="entry name" value="Znf_CppX_C4_sf"/>
</dbReference>
<dbReference type="NCBIfam" id="TIGR00382">
    <property type="entry name" value="clpX"/>
    <property type="match status" value="1"/>
</dbReference>
<dbReference type="NCBIfam" id="NF003745">
    <property type="entry name" value="PRK05342.1"/>
    <property type="match status" value="1"/>
</dbReference>
<dbReference type="PANTHER" id="PTHR48102:SF7">
    <property type="entry name" value="ATP-DEPENDENT CLP PROTEASE ATP-BINDING SUBUNIT CLPX-LIKE, MITOCHONDRIAL"/>
    <property type="match status" value="1"/>
</dbReference>
<dbReference type="PANTHER" id="PTHR48102">
    <property type="entry name" value="ATP-DEPENDENT CLP PROTEASE ATP-BINDING SUBUNIT CLPX-LIKE, MITOCHONDRIAL-RELATED"/>
    <property type="match status" value="1"/>
</dbReference>
<dbReference type="Pfam" id="PF07724">
    <property type="entry name" value="AAA_2"/>
    <property type="match status" value="1"/>
</dbReference>
<dbReference type="Pfam" id="PF10431">
    <property type="entry name" value="ClpB_D2-small"/>
    <property type="match status" value="1"/>
</dbReference>
<dbReference type="Pfam" id="PF06689">
    <property type="entry name" value="zf-C4_ClpX"/>
    <property type="match status" value="1"/>
</dbReference>
<dbReference type="SMART" id="SM00382">
    <property type="entry name" value="AAA"/>
    <property type="match status" value="1"/>
</dbReference>
<dbReference type="SMART" id="SM01086">
    <property type="entry name" value="ClpB_D2-small"/>
    <property type="match status" value="1"/>
</dbReference>
<dbReference type="SMART" id="SM00994">
    <property type="entry name" value="zf-C4_ClpX"/>
    <property type="match status" value="1"/>
</dbReference>
<dbReference type="SUPFAM" id="SSF57716">
    <property type="entry name" value="Glucocorticoid receptor-like (DNA-binding domain)"/>
    <property type="match status" value="1"/>
</dbReference>
<dbReference type="SUPFAM" id="SSF52540">
    <property type="entry name" value="P-loop containing nucleoside triphosphate hydrolases"/>
    <property type="match status" value="1"/>
</dbReference>
<dbReference type="PROSITE" id="PS51902">
    <property type="entry name" value="CLPX_ZB"/>
    <property type="match status" value="1"/>
</dbReference>
<evidence type="ECO:0000255" key="1">
    <source>
        <dbReference type="HAMAP-Rule" id="MF_00175"/>
    </source>
</evidence>
<evidence type="ECO:0000255" key="2">
    <source>
        <dbReference type="PROSITE-ProRule" id="PRU01250"/>
    </source>
</evidence>
<proteinExistence type="inferred from homology"/>
<organism>
    <name type="scientific">Buchnera aphidicola subsp. Acyrthosiphon pisum (strain APS)</name>
    <name type="common">Acyrthosiphon pisum symbiotic bacterium</name>
    <dbReference type="NCBI Taxonomy" id="107806"/>
    <lineage>
        <taxon>Bacteria</taxon>
        <taxon>Pseudomonadati</taxon>
        <taxon>Pseudomonadota</taxon>
        <taxon>Gammaproteobacteria</taxon>
        <taxon>Enterobacterales</taxon>
        <taxon>Erwiniaceae</taxon>
        <taxon>Buchnera</taxon>
    </lineage>
</organism>
<name>CLPX_BUCAI</name>
<comment type="function">
    <text evidence="1">ATP-dependent specificity component of the Clp protease. It directs the protease to specific substrates. Can perform chaperone functions in the absence of ClpP.</text>
</comment>
<comment type="subunit">
    <text evidence="1">Component of the ClpX-ClpP complex. Forms a hexameric ring that, in the presence of ATP, binds to fourteen ClpP subunits assembled into a disk-like structure with a central cavity, resembling the structure of eukaryotic proteasomes.</text>
</comment>
<comment type="similarity">
    <text evidence="1">Belongs to the ClpX chaperone family.</text>
</comment>
<reference key="1">
    <citation type="journal article" date="2000" name="Nature">
        <title>Genome sequence of the endocellular bacterial symbiont of aphids Buchnera sp. APS.</title>
        <authorList>
            <person name="Shigenobu S."/>
            <person name="Watanabe H."/>
            <person name="Hattori M."/>
            <person name="Sakaki Y."/>
            <person name="Ishikawa H."/>
        </authorList>
    </citation>
    <scope>NUCLEOTIDE SEQUENCE [LARGE SCALE GENOMIC DNA]</scope>
    <source>
        <strain>APS</strain>
    </source>
</reference>